<comment type="subunit">
    <text evidence="4">Interacts with RBG1.</text>
</comment>
<comment type="interaction">
    <interactant intactId="EBI-23586">
        <id>P53316</id>
    </interactant>
    <interactant intactId="EBI-25362">
        <id>P40561</id>
        <label>SGN1</label>
    </interactant>
    <organismsDiffer>false</organismsDiffer>
    <experiments>6</experiments>
</comment>
<comment type="miscellaneous">
    <text evidence="3">Present with 1910 molecules/cell in log phase SD medium.</text>
</comment>
<sequence>MNIAEEPSDEVISSGPEDTDICSQQTSASAEAGDQSIKIERKTSTGLQLEQLANTNLLTIRIKWQLQEEEDDHCNSRITDQIMDTIQHYKGISVNNSDTETYEFLPDTRRLQVLEQNKDIYLYEHGSQEYEKSYKDNEEEDDWRYDTVLQAQFKYPKSLENACTDISELLKSEPIGQHIDKWSIGVNKHALTYPGNIFVGGIAKSLSIGELSFLFSKYGPILSMKLIYDKTKGEPNGYGFISYPLGSQASLCIKELNGRTVNGSTLFINYHVERKERERIHWDHVKENNNDDNFRCLFIGNLPYHNPEKVETLITPKEVIEVIKKELSKKFPDFDIISYYFPKRSNTRSSSSVSFNEEGSVESNKSSNNTNGNAQDEDMLKGYGFIKLINHEQALAAIETFNGFMWHGNRLVVNKAVQHKVYNNHNSHDRHPSISNHNDMEVLEFANNPMYDYNNYTYDRYYFNNNKNGNSNDTSNVRYFDSVRSTPVAEKMDLFYPQRESFSEGRGQRVPRFMGNKFDMYQYPSTSYSLPIPMSNQQESNLYVKHIPLSWTDEDLYDFYKSFGEIISVKVITVGGSKNKYRQQSNDSSSDNDLPVGSSRGYGFVSFESPLDAAKAILNTDGYQVSKDQVLSVSFAQKRGNLSSSDDDDQSQTDNSSKFQNFQPHNDYHKAYPTKYNKKFINALMTQNQSQQQVSRENYFIPLQYPNTNTKPVNSYNLISANQNNANWMMPMFPSFGFIPQVPPVPYIIPPQNPAANHIPIMANGSNEEEEFSSGDYSMDY</sequence>
<evidence type="ECO:0000255" key="1">
    <source>
        <dbReference type="PROSITE-ProRule" id="PRU00176"/>
    </source>
</evidence>
<evidence type="ECO:0000256" key="2">
    <source>
        <dbReference type="SAM" id="MobiDB-lite"/>
    </source>
</evidence>
<evidence type="ECO:0000269" key="3">
    <source>
    </source>
</evidence>
<evidence type="ECO:0000269" key="4">
    <source>
    </source>
</evidence>
<evidence type="ECO:0007744" key="5">
    <source>
    </source>
</evidence>
<evidence type="ECO:0007744" key="6">
    <source>
    </source>
</evidence>
<evidence type="ECO:0007744" key="7">
    <source>
    </source>
</evidence>
<proteinExistence type="evidence at protein level"/>
<protein>
    <recommendedName>
        <fullName>Uncharacterized RNA-binding protein YGR250C</fullName>
    </recommendedName>
</protein>
<reference key="1">
    <citation type="journal article" date="1997" name="Yeast">
        <title>Analysis of a 17.9 kb region from Saccharomyces cerevisiae chromosome VII reveals the presence of eight open reading frames, including BRF1 (TFIIIB70) and GCN5 genes.</title>
        <authorList>
            <person name="Feroli F."/>
            <person name="Carignani G."/>
            <person name="Pavanello A."/>
            <person name="Guerreiro P."/>
            <person name="Azevedo D."/>
            <person name="Rodrigues-Pousada C."/>
            <person name="Melchioretto P."/>
            <person name="Panzeri L."/>
            <person name="Agostoni Carbone M.L."/>
        </authorList>
    </citation>
    <scope>NUCLEOTIDE SEQUENCE [GENOMIC DNA]</scope>
    <source>
        <strain>ATCC 96604 / S288c / FY1679</strain>
    </source>
</reference>
<reference key="2">
    <citation type="journal article" date="1997" name="Nature">
        <title>The nucleotide sequence of Saccharomyces cerevisiae chromosome VII.</title>
        <authorList>
            <person name="Tettelin H."/>
            <person name="Agostoni-Carbone M.L."/>
            <person name="Albermann K."/>
            <person name="Albers M."/>
            <person name="Arroyo J."/>
            <person name="Backes U."/>
            <person name="Barreiros T."/>
            <person name="Bertani I."/>
            <person name="Bjourson A.J."/>
            <person name="Brueckner M."/>
            <person name="Bruschi C.V."/>
            <person name="Carignani G."/>
            <person name="Castagnoli L."/>
            <person name="Cerdan E."/>
            <person name="Clemente M.L."/>
            <person name="Coblenz A."/>
            <person name="Coglievina M."/>
            <person name="Coissac E."/>
            <person name="Defoor E."/>
            <person name="Del Bino S."/>
            <person name="Delius H."/>
            <person name="Delneri D."/>
            <person name="de Wergifosse P."/>
            <person name="Dujon B."/>
            <person name="Durand P."/>
            <person name="Entian K.-D."/>
            <person name="Eraso P."/>
            <person name="Escribano V."/>
            <person name="Fabiani L."/>
            <person name="Fartmann B."/>
            <person name="Feroli F."/>
            <person name="Feuermann M."/>
            <person name="Frontali L."/>
            <person name="Garcia-Gonzalez M."/>
            <person name="Garcia-Saez M.I."/>
            <person name="Goffeau A."/>
            <person name="Guerreiro P."/>
            <person name="Hani J."/>
            <person name="Hansen M."/>
            <person name="Hebling U."/>
            <person name="Hernandez K."/>
            <person name="Heumann K."/>
            <person name="Hilger F."/>
            <person name="Hofmann B."/>
            <person name="Indge K.J."/>
            <person name="James C.M."/>
            <person name="Klima R."/>
            <person name="Koetter P."/>
            <person name="Kramer B."/>
            <person name="Kramer W."/>
            <person name="Lauquin G."/>
            <person name="Leuther H."/>
            <person name="Louis E.J."/>
            <person name="Maillier E."/>
            <person name="Marconi A."/>
            <person name="Martegani E."/>
            <person name="Mazon M.J."/>
            <person name="Mazzoni C."/>
            <person name="McReynolds A.D.K."/>
            <person name="Melchioretto P."/>
            <person name="Mewes H.-W."/>
            <person name="Minenkova O."/>
            <person name="Mueller-Auer S."/>
            <person name="Nawrocki A."/>
            <person name="Netter P."/>
            <person name="Neu R."/>
            <person name="Nombela C."/>
            <person name="Oliver S.G."/>
            <person name="Panzeri L."/>
            <person name="Paoluzi S."/>
            <person name="Plevani P."/>
            <person name="Portetelle D."/>
            <person name="Portillo F."/>
            <person name="Potier S."/>
            <person name="Purnelle B."/>
            <person name="Rieger M."/>
            <person name="Riles L."/>
            <person name="Rinaldi T."/>
            <person name="Robben J."/>
            <person name="Rodrigues-Pousada C."/>
            <person name="Rodriguez-Belmonte E."/>
            <person name="Rodriguez-Torres A.M."/>
            <person name="Rose M."/>
            <person name="Ruzzi M."/>
            <person name="Saliola M."/>
            <person name="Sanchez-Perez M."/>
            <person name="Schaefer B."/>
            <person name="Schaefer M."/>
            <person name="Scharfe M."/>
            <person name="Schmidheini T."/>
            <person name="Schreer A."/>
            <person name="Skala J."/>
            <person name="Souciet J.-L."/>
            <person name="Steensma H.Y."/>
            <person name="Talla E."/>
            <person name="Thierry A."/>
            <person name="Vandenbol M."/>
            <person name="van der Aart Q.J.M."/>
            <person name="Van Dyck L."/>
            <person name="Vanoni M."/>
            <person name="Verhasselt P."/>
            <person name="Voet M."/>
            <person name="Volckaert G."/>
            <person name="Wambutt R."/>
            <person name="Watson M.D."/>
            <person name="Weber N."/>
            <person name="Wedler E."/>
            <person name="Wedler H."/>
            <person name="Wipfli P."/>
            <person name="Wolf K."/>
            <person name="Wright L.F."/>
            <person name="Zaccaria P."/>
            <person name="Zimmermann M."/>
            <person name="Zollner A."/>
            <person name="Kleine K."/>
        </authorList>
    </citation>
    <scope>NUCLEOTIDE SEQUENCE [LARGE SCALE GENOMIC DNA]</scope>
    <source>
        <strain>ATCC 204508 / S288c</strain>
    </source>
</reference>
<reference key="3">
    <citation type="journal article" date="2014" name="G3 (Bethesda)">
        <title>The reference genome sequence of Saccharomyces cerevisiae: Then and now.</title>
        <authorList>
            <person name="Engel S.R."/>
            <person name="Dietrich F.S."/>
            <person name="Fisk D.G."/>
            <person name="Binkley G."/>
            <person name="Balakrishnan R."/>
            <person name="Costanzo M.C."/>
            <person name="Dwight S.S."/>
            <person name="Hitz B.C."/>
            <person name="Karra K."/>
            <person name="Nash R.S."/>
            <person name="Weng S."/>
            <person name="Wong E.D."/>
            <person name="Lloyd P."/>
            <person name="Skrzypek M.S."/>
            <person name="Miyasato S.R."/>
            <person name="Simison M."/>
            <person name="Cherry J.M."/>
        </authorList>
    </citation>
    <scope>GENOME REANNOTATION</scope>
    <source>
        <strain>ATCC 204508 / S288c</strain>
    </source>
</reference>
<reference key="4">
    <citation type="journal article" date="2003" name="Nature">
        <title>Global analysis of protein expression in yeast.</title>
        <authorList>
            <person name="Ghaemmaghami S."/>
            <person name="Huh W.-K."/>
            <person name="Bower K."/>
            <person name="Howson R.W."/>
            <person name="Belle A."/>
            <person name="Dephoure N."/>
            <person name="O'Shea E.K."/>
            <person name="Weissman J.S."/>
        </authorList>
    </citation>
    <scope>LEVEL OF PROTEIN EXPRESSION [LARGE SCALE ANALYSIS]</scope>
</reference>
<reference key="5">
    <citation type="journal article" date="2007" name="J. Proteome Res.">
        <title>Large-scale phosphorylation analysis of alpha-factor-arrested Saccharomyces cerevisiae.</title>
        <authorList>
            <person name="Li X."/>
            <person name="Gerber S.A."/>
            <person name="Rudner A.D."/>
            <person name="Beausoleil S.A."/>
            <person name="Haas W."/>
            <person name="Villen J."/>
            <person name="Elias J.E."/>
            <person name="Gygi S.P."/>
        </authorList>
    </citation>
    <scope>PHOSPHORYLATION [LARGE SCALE ANALYSIS] AT SER-482; SER-485; THR-486 AND SER-501</scope>
    <scope>IDENTIFICATION BY MASS SPECTROMETRY [LARGE SCALE ANALYSIS]</scope>
    <source>
        <strain>ADR376</strain>
    </source>
</reference>
<reference key="6">
    <citation type="journal article" date="2008" name="Mol. Cell. Proteomics">
        <title>A multidimensional chromatography technology for in-depth phosphoproteome analysis.</title>
        <authorList>
            <person name="Albuquerque C.P."/>
            <person name="Smolka M.B."/>
            <person name="Payne S.H."/>
            <person name="Bafna V."/>
            <person name="Eng J."/>
            <person name="Zhou H."/>
        </authorList>
    </citation>
    <scope>PHOSPHORYLATION [LARGE SCALE ANALYSIS] AT SER-29 AND SER-501</scope>
    <scope>IDENTIFICATION BY MASS SPECTROMETRY [LARGE SCALE ANALYSIS]</scope>
</reference>
<reference key="7">
    <citation type="journal article" date="2009" name="Eukaryot. Cell">
        <title>Saccharomyces cerevisiae Rbg1 protein and its binding partner Gir2 interact on polyribosomes with Gcn1.</title>
        <authorList>
            <person name="Wout P.K."/>
            <person name="Sattlegger E."/>
            <person name="Sullivan S.M."/>
            <person name="Maddock J.R."/>
        </authorList>
    </citation>
    <scope>INTERACTION WITH RBG1</scope>
</reference>
<reference key="8">
    <citation type="journal article" date="2009" name="Science">
        <title>Global analysis of Cdk1 substrate phosphorylation sites provides insights into evolution.</title>
        <authorList>
            <person name="Holt L.J."/>
            <person name="Tuch B.B."/>
            <person name="Villen J."/>
            <person name="Johnson A.D."/>
            <person name="Gygi S.P."/>
            <person name="Morgan D.O."/>
        </authorList>
    </citation>
    <scope>PHOSPHORYLATION [LARGE SCALE ANALYSIS] AT SER-433; SER-435; SER-482; SER-485; THR-486 AND SER-501</scope>
    <scope>IDENTIFICATION BY MASS SPECTROMETRY [LARGE SCALE ANALYSIS]</scope>
</reference>
<dbReference type="EMBL" id="Z73035">
    <property type="protein sequence ID" value="CAA97279.1"/>
    <property type="molecule type" value="Genomic_DNA"/>
</dbReference>
<dbReference type="EMBL" id="BK006941">
    <property type="protein sequence ID" value="DAA08341.1"/>
    <property type="molecule type" value="Genomic_DNA"/>
</dbReference>
<dbReference type="PIR" id="S64576">
    <property type="entry name" value="S64576"/>
</dbReference>
<dbReference type="SMR" id="P53316"/>
<dbReference type="BioGRID" id="33501">
    <property type="interactions" value="114"/>
</dbReference>
<dbReference type="DIP" id="DIP-5559N"/>
<dbReference type="FunCoup" id="P53316">
    <property type="interactions" value="299"/>
</dbReference>
<dbReference type="IntAct" id="P53316">
    <property type="interactions" value="16"/>
</dbReference>
<dbReference type="MINT" id="P53316"/>
<dbReference type="STRING" id="4932.YGR250C"/>
<dbReference type="iPTMnet" id="P53316"/>
<dbReference type="PaxDb" id="4932-YGR250C"/>
<dbReference type="PeptideAtlas" id="P53316"/>
<dbReference type="EnsemblFungi" id="YGR250C_mRNA">
    <property type="protein sequence ID" value="YGR250C"/>
    <property type="gene ID" value="YGR250C"/>
</dbReference>
<dbReference type="KEGG" id="sce:YGR250C"/>
<dbReference type="AGR" id="SGD:S000003482"/>
<dbReference type="SGD" id="S000003482">
    <property type="gene designation" value="YGR250C"/>
</dbReference>
<dbReference type="VEuPathDB" id="FungiDB:YGR250C"/>
<dbReference type="eggNOG" id="KOG0108">
    <property type="taxonomic scope" value="Eukaryota"/>
</dbReference>
<dbReference type="HOGENOM" id="CLU_018630_0_0_1"/>
<dbReference type="InParanoid" id="P53316"/>
<dbReference type="OMA" id="INYHVER"/>
<dbReference type="OrthoDB" id="6159137at2759"/>
<dbReference type="BioCyc" id="YEAST:G3O-30923-MONOMER"/>
<dbReference type="BioGRID-ORCS" id="853165">
    <property type="hits" value="3 hits in 10 CRISPR screens"/>
</dbReference>
<dbReference type="CD-CODE" id="A777E0F8">
    <property type="entry name" value="P-body"/>
</dbReference>
<dbReference type="CD-CODE" id="E03F929F">
    <property type="entry name" value="Stress granule"/>
</dbReference>
<dbReference type="PRO" id="PR:P53316"/>
<dbReference type="Proteomes" id="UP000002311">
    <property type="component" value="Chromosome VII"/>
</dbReference>
<dbReference type="RNAct" id="P53316">
    <property type="molecule type" value="protein"/>
</dbReference>
<dbReference type="GO" id="GO:0005737">
    <property type="term" value="C:cytoplasm"/>
    <property type="evidence" value="ECO:0007005"/>
    <property type="project" value="SGD"/>
</dbReference>
<dbReference type="GO" id="GO:0010494">
    <property type="term" value="C:cytoplasmic stress granule"/>
    <property type="evidence" value="ECO:0000314"/>
    <property type="project" value="SGD"/>
</dbReference>
<dbReference type="GO" id="GO:0003729">
    <property type="term" value="F:mRNA binding"/>
    <property type="evidence" value="ECO:0007005"/>
    <property type="project" value="SGD"/>
</dbReference>
<dbReference type="GO" id="GO:2000134">
    <property type="term" value="P:negative regulation of G1/S transition of mitotic cell cycle"/>
    <property type="evidence" value="ECO:0000353"/>
    <property type="project" value="SGD"/>
</dbReference>
<dbReference type="CDD" id="cd12362">
    <property type="entry name" value="RRM3_CELF1-6"/>
    <property type="match status" value="1"/>
</dbReference>
<dbReference type="CDD" id="cd00590">
    <property type="entry name" value="RRM_SF"/>
    <property type="match status" value="2"/>
</dbReference>
<dbReference type="FunFam" id="3.30.70.330:FF:001368">
    <property type="entry name" value="Conserved protein"/>
    <property type="match status" value="1"/>
</dbReference>
<dbReference type="FunFam" id="3.30.70.330:FF:000733">
    <property type="entry name" value="YGR250C-like protein"/>
    <property type="match status" value="1"/>
</dbReference>
<dbReference type="Gene3D" id="3.30.70.330">
    <property type="match status" value="3"/>
</dbReference>
<dbReference type="InterPro" id="IPR012677">
    <property type="entry name" value="Nucleotide-bd_a/b_plait_sf"/>
</dbReference>
<dbReference type="InterPro" id="IPR035979">
    <property type="entry name" value="RBD_domain_sf"/>
</dbReference>
<dbReference type="InterPro" id="IPR000504">
    <property type="entry name" value="RRM_dom"/>
</dbReference>
<dbReference type="InterPro" id="IPR052462">
    <property type="entry name" value="SLIRP/GR-RBP-like"/>
</dbReference>
<dbReference type="PANTHER" id="PTHR48027">
    <property type="entry name" value="HETEROGENEOUS NUCLEAR RIBONUCLEOPROTEIN 87F-RELATED"/>
    <property type="match status" value="1"/>
</dbReference>
<dbReference type="Pfam" id="PF00076">
    <property type="entry name" value="RRM_1"/>
    <property type="match status" value="3"/>
</dbReference>
<dbReference type="SMART" id="SM00360">
    <property type="entry name" value="RRM"/>
    <property type="match status" value="3"/>
</dbReference>
<dbReference type="SUPFAM" id="SSF54928">
    <property type="entry name" value="RNA-binding domain, RBD"/>
    <property type="match status" value="3"/>
</dbReference>
<dbReference type="PROSITE" id="PS50102">
    <property type="entry name" value="RRM"/>
    <property type="match status" value="3"/>
</dbReference>
<organism>
    <name type="scientific">Saccharomyces cerevisiae (strain ATCC 204508 / S288c)</name>
    <name type="common">Baker's yeast</name>
    <dbReference type="NCBI Taxonomy" id="559292"/>
    <lineage>
        <taxon>Eukaryota</taxon>
        <taxon>Fungi</taxon>
        <taxon>Dikarya</taxon>
        <taxon>Ascomycota</taxon>
        <taxon>Saccharomycotina</taxon>
        <taxon>Saccharomycetes</taxon>
        <taxon>Saccharomycetales</taxon>
        <taxon>Saccharomycetaceae</taxon>
        <taxon>Saccharomyces</taxon>
    </lineage>
</organism>
<keyword id="KW-0597">Phosphoprotein</keyword>
<keyword id="KW-1185">Reference proteome</keyword>
<keyword id="KW-0677">Repeat</keyword>
<keyword id="KW-0694">RNA-binding</keyword>
<gene>
    <name type="ordered locus">YGR250C</name>
</gene>
<feature type="chain" id="PRO_0000082030" description="Uncharacterized RNA-binding protein YGR250C">
    <location>
        <begin position="1"/>
        <end position="781"/>
    </location>
</feature>
<feature type="domain" description="RRM 1" evidence="1">
    <location>
        <begin position="195"/>
        <end position="273"/>
    </location>
</feature>
<feature type="domain" description="RRM 2" evidence="1">
    <location>
        <begin position="295"/>
        <end position="418"/>
    </location>
</feature>
<feature type="domain" description="RRM 3" evidence="1">
    <location>
        <begin position="540"/>
        <end position="638"/>
    </location>
</feature>
<feature type="region of interest" description="Disordered" evidence="2">
    <location>
        <begin position="1"/>
        <end position="34"/>
    </location>
</feature>
<feature type="region of interest" description="Disordered" evidence="2">
    <location>
        <begin position="345"/>
        <end position="375"/>
    </location>
</feature>
<feature type="region of interest" description="Disordered" evidence="2">
    <location>
        <begin position="640"/>
        <end position="668"/>
    </location>
</feature>
<feature type="compositionally biased region" description="Low complexity" evidence="2">
    <location>
        <begin position="347"/>
        <end position="364"/>
    </location>
</feature>
<feature type="compositionally biased region" description="Polar residues" evidence="2">
    <location>
        <begin position="365"/>
        <end position="374"/>
    </location>
</feature>
<feature type="modified residue" description="Phosphoserine" evidence="6">
    <location>
        <position position="29"/>
    </location>
</feature>
<feature type="modified residue" description="Phosphoserine" evidence="7">
    <location>
        <position position="433"/>
    </location>
</feature>
<feature type="modified residue" description="Phosphoserine" evidence="7">
    <location>
        <position position="435"/>
    </location>
</feature>
<feature type="modified residue" description="Phosphoserine" evidence="5 7">
    <location>
        <position position="482"/>
    </location>
</feature>
<feature type="modified residue" description="Phosphoserine" evidence="5 7">
    <location>
        <position position="485"/>
    </location>
</feature>
<feature type="modified residue" description="Phosphothreonine" evidence="5 7">
    <location>
        <position position="486"/>
    </location>
</feature>
<feature type="modified residue" description="Phosphoserine" evidence="5 6 7">
    <location>
        <position position="501"/>
    </location>
</feature>
<name>YG5B_YEAST</name>
<accession>P53316</accession>
<accession>D6VV30</accession>